<sequence>MRLIHIPALESNYIWLLADSNQHCVIVDPGEASPVESVLTYKGLLPQAILLTHHHQDHLGGVPQLLRRFPDIPVYGPKETNKKGATILLKEGDQLFICSQTFSVIEVPGHTLGHIAYYSAPYLFCGDTLFSAGCGRLFEGTADQMYDSIQKLIQLPDETLICAGHEYTLSNLKFARSILPDDPQIALYQKQAEQLKAKNQPTLPALLKLERQVNLFLRCKESFLQKKMGTHKHDPLSVFSTLREMKDRF</sequence>
<accession>C4K7Z9</accession>
<keyword id="KW-0378">Hydrolase</keyword>
<keyword id="KW-0479">Metal-binding</keyword>
<keyword id="KW-0862">Zinc</keyword>
<proteinExistence type="inferred from homology"/>
<reference key="1">
    <citation type="journal article" date="2009" name="Proc. Natl. Acad. Sci. U.S.A.">
        <title>Hamiltonella defensa, genome evolution of protective bacterial endosymbiont from pathogenic ancestors.</title>
        <authorList>
            <person name="Degnan P.H."/>
            <person name="Yu Y."/>
            <person name="Sisneros N."/>
            <person name="Wing R.A."/>
            <person name="Moran N.A."/>
        </authorList>
    </citation>
    <scope>NUCLEOTIDE SEQUENCE [LARGE SCALE GENOMIC DNA]</scope>
    <source>
        <strain>5AT</strain>
    </source>
</reference>
<name>GLO2_HAMD5</name>
<organism>
    <name type="scientific">Hamiltonella defensa subsp. Acyrthosiphon pisum (strain 5AT)</name>
    <dbReference type="NCBI Taxonomy" id="572265"/>
    <lineage>
        <taxon>Bacteria</taxon>
        <taxon>Pseudomonadati</taxon>
        <taxon>Pseudomonadota</taxon>
        <taxon>Gammaproteobacteria</taxon>
        <taxon>Enterobacterales</taxon>
        <taxon>Enterobacteriaceae</taxon>
        <taxon>aphid secondary symbionts</taxon>
        <taxon>Candidatus Hamiltonella</taxon>
    </lineage>
</organism>
<comment type="function">
    <text evidence="1">Thiolesterase that catalyzes the hydrolysis of S-D-lactoyl-glutathione to form glutathione and D-lactic acid.</text>
</comment>
<comment type="catalytic activity">
    <reaction evidence="1">
        <text>an S-(2-hydroxyacyl)glutathione + H2O = a 2-hydroxy carboxylate + glutathione + H(+)</text>
        <dbReference type="Rhea" id="RHEA:21864"/>
        <dbReference type="ChEBI" id="CHEBI:15377"/>
        <dbReference type="ChEBI" id="CHEBI:15378"/>
        <dbReference type="ChEBI" id="CHEBI:57925"/>
        <dbReference type="ChEBI" id="CHEBI:58896"/>
        <dbReference type="ChEBI" id="CHEBI:71261"/>
        <dbReference type="EC" id="3.1.2.6"/>
    </reaction>
</comment>
<comment type="cofactor">
    <cofactor evidence="1">
        <name>Zn(2+)</name>
        <dbReference type="ChEBI" id="CHEBI:29105"/>
    </cofactor>
    <text evidence="1">Binds 2 Zn(2+) ions per subunit.</text>
</comment>
<comment type="pathway">
    <text evidence="1">Secondary metabolite metabolism; methylglyoxal degradation; (R)-lactate from methylglyoxal: step 2/2.</text>
</comment>
<comment type="subunit">
    <text evidence="1">Monomer.</text>
</comment>
<comment type="similarity">
    <text evidence="1">Belongs to the metallo-beta-lactamase superfamily. Glyoxalase II family.</text>
</comment>
<evidence type="ECO:0000255" key="1">
    <source>
        <dbReference type="HAMAP-Rule" id="MF_01374"/>
    </source>
</evidence>
<gene>
    <name evidence="1" type="primary">gloB</name>
    <name type="ordered locus">HDEF_2129</name>
</gene>
<protein>
    <recommendedName>
        <fullName evidence="1">Hydroxyacylglutathione hydrolase</fullName>
        <ecNumber evidence="1">3.1.2.6</ecNumber>
    </recommendedName>
    <alternativeName>
        <fullName evidence="1">Glyoxalase II</fullName>
        <shortName evidence="1">Glx II</shortName>
    </alternativeName>
</protein>
<feature type="chain" id="PRO_1000215085" description="Hydroxyacylglutathione hydrolase">
    <location>
        <begin position="1"/>
        <end position="249"/>
    </location>
</feature>
<feature type="binding site" evidence="1">
    <location>
        <position position="53"/>
    </location>
    <ligand>
        <name>Zn(2+)</name>
        <dbReference type="ChEBI" id="CHEBI:29105"/>
        <label>1</label>
    </ligand>
</feature>
<feature type="binding site" evidence="1">
    <location>
        <position position="55"/>
    </location>
    <ligand>
        <name>Zn(2+)</name>
        <dbReference type="ChEBI" id="CHEBI:29105"/>
        <label>1</label>
    </ligand>
</feature>
<feature type="binding site" evidence="1">
    <location>
        <position position="57"/>
    </location>
    <ligand>
        <name>Zn(2+)</name>
        <dbReference type="ChEBI" id="CHEBI:29105"/>
        <label>2</label>
    </ligand>
</feature>
<feature type="binding site" evidence="1">
    <location>
        <position position="58"/>
    </location>
    <ligand>
        <name>Zn(2+)</name>
        <dbReference type="ChEBI" id="CHEBI:29105"/>
        <label>2</label>
    </ligand>
</feature>
<feature type="binding site" evidence="1">
    <location>
        <position position="110"/>
    </location>
    <ligand>
        <name>Zn(2+)</name>
        <dbReference type="ChEBI" id="CHEBI:29105"/>
        <label>1</label>
    </ligand>
</feature>
<feature type="binding site" evidence="1">
    <location>
        <position position="127"/>
    </location>
    <ligand>
        <name>Zn(2+)</name>
        <dbReference type="ChEBI" id="CHEBI:29105"/>
        <label>1</label>
    </ligand>
</feature>
<feature type="binding site" evidence="1">
    <location>
        <position position="127"/>
    </location>
    <ligand>
        <name>Zn(2+)</name>
        <dbReference type="ChEBI" id="CHEBI:29105"/>
        <label>2</label>
    </ligand>
</feature>
<feature type="binding site" evidence="1">
    <location>
        <position position="165"/>
    </location>
    <ligand>
        <name>Zn(2+)</name>
        <dbReference type="ChEBI" id="CHEBI:29105"/>
        <label>2</label>
    </ligand>
</feature>
<dbReference type="EC" id="3.1.2.6" evidence="1"/>
<dbReference type="EMBL" id="CP001277">
    <property type="protein sequence ID" value="ACQ68692.1"/>
    <property type="molecule type" value="Genomic_DNA"/>
</dbReference>
<dbReference type="RefSeq" id="WP_015874437.1">
    <property type="nucleotide sequence ID" value="NC_012751.1"/>
</dbReference>
<dbReference type="SMR" id="C4K7Z9"/>
<dbReference type="STRING" id="572265.HDEF_2129"/>
<dbReference type="GeneID" id="66261667"/>
<dbReference type="KEGG" id="hde:HDEF_2129"/>
<dbReference type="eggNOG" id="COG0491">
    <property type="taxonomic scope" value="Bacteria"/>
</dbReference>
<dbReference type="HOGENOM" id="CLU_030571_4_1_6"/>
<dbReference type="UniPathway" id="UPA00619">
    <property type="reaction ID" value="UER00676"/>
</dbReference>
<dbReference type="Proteomes" id="UP000002334">
    <property type="component" value="Chromosome"/>
</dbReference>
<dbReference type="GO" id="GO:0004416">
    <property type="term" value="F:hydroxyacylglutathione hydrolase activity"/>
    <property type="evidence" value="ECO:0007669"/>
    <property type="project" value="UniProtKB-UniRule"/>
</dbReference>
<dbReference type="GO" id="GO:0046872">
    <property type="term" value="F:metal ion binding"/>
    <property type="evidence" value="ECO:0007669"/>
    <property type="project" value="UniProtKB-KW"/>
</dbReference>
<dbReference type="GO" id="GO:0019243">
    <property type="term" value="P:methylglyoxal catabolic process to D-lactate via S-lactoyl-glutathione"/>
    <property type="evidence" value="ECO:0007669"/>
    <property type="project" value="InterPro"/>
</dbReference>
<dbReference type="CDD" id="cd07723">
    <property type="entry name" value="hydroxyacylglutathione_hydrolase_MBL-fold"/>
    <property type="match status" value="1"/>
</dbReference>
<dbReference type="Gene3D" id="3.60.15.10">
    <property type="entry name" value="Ribonuclease Z/Hydroxyacylglutathione hydrolase-like"/>
    <property type="match status" value="1"/>
</dbReference>
<dbReference type="HAMAP" id="MF_01374">
    <property type="entry name" value="Glyoxalase_2"/>
    <property type="match status" value="1"/>
</dbReference>
<dbReference type="InterPro" id="IPR035680">
    <property type="entry name" value="Clx_II_MBL"/>
</dbReference>
<dbReference type="InterPro" id="IPR050110">
    <property type="entry name" value="Glyoxalase_II_hydrolase"/>
</dbReference>
<dbReference type="InterPro" id="IPR032282">
    <property type="entry name" value="HAGH_C"/>
</dbReference>
<dbReference type="InterPro" id="IPR017782">
    <property type="entry name" value="Hydroxyacylglutathione_Hdrlase"/>
</dbReference>
<dbReference type="InterPro" id="IPR001279">
    <property type="entry name" value="Metallo-B-lactamas"/>
</dbReference>
<dbReference type="InterPro" id="IPR036866">
    <property type="entry name" value="RibonucZ/Hydroxyglut_hydro"/>
</dbReference>
<dbReference type="NCBIfam" id="TIGR03413">
    <property type="entry name" value="GSH_gloB"/>
    <property type="match status" value="1"/>
</dbReference>
<dbReference type="PANTHER" id="PTHR43705">
    <property type="entry name" value="HYDROXYACYLGLUTATHIONE HYDROLASE"/>
    <property type="match status" value="1"/>
</dbReference>
<dbReference type="PANTHER" id="PTHR43705:SF1">
    <property type="entry name" value="HYDROXYACYLGLUTATHIONE HYDROLASE GLOB"/>
    <property type="match status" value="1"/>
</dbReference>
<dbReference type="Pfam" id="PF16123">
    <property type="entry name" value="HAGH_C"/>
    <property type="match status" value="1"/>
</dbReference>
<dbReference type="Pfam" id="PF00753">
    <property type="entry name" value="Lactamase_B"/>
    <property type="match status" value="1"/>
</dbReference>
<dbReference type="PIRSF" id="PIRSF005457">
    <property type="entry name" value="Glx"/>
    <property type="match status" value="1"/>
</dbReference>
<dbReference type="SMART" id="SM00849">
    <property type="entry name" value="Lactamase_B"/>
    <property type="match status" value="1"/>
</dbReference>
<dbReference type="SUPFAM" id="SSF56281">
    <property type="entry name" value="Metallo-hydrolase/oxidoreductase"/>
    <property type="match status" value="1"/>
</dbReference>